<reference key="1">
    <citation type="journal article" date="2008" name="BMC Genomics">
        <title>The genome sequence of the fish pathogen Aliivibrio salmonicida strain LFI1238 shows extensive evidence of gene decay.</title>
        <authorList>
            <person name="Hjerde E."/>
            <person name="Lorentzen M.S."/>
            <person name="Holden M.T."/>
            <person name="Seeger K."/>
            <person name="Paulsen S."/>
            <person name="Bason N."/>
            <person name="Churcher C."/>
            <person name="Harris D."/>
            <person name="Norbertczak H."/>
            <person name="Quail M.A."/>
            <person name="Sanders S."/>
            <person name="Thurston S."/>
            <person name="Parkhill J."/>
            <person name="Willassen N.P."/>
            <person name="Thomson N.R."/>
        </authorList>
    </citation>
    <scope>NUCLEOTIDE SEQUENCE [LARGE SCALE GENOMIC DNA]</scope>
    <source>
        <strain>LFI1238</strain>
    </source>
</reference>
<gene>
    <name evidence="1" type="primary">rplQ</name>
    <name type="ordered locus">VSAL_I0345</name>
</gene>
<protein>
    <recommendedName>
        <fullName evidence="1">Large ribosomal subunit protein bL17</fullName>
    </recommendedName>
    <alternativeName>
        <fullName evidence="2">50S ribosomal protein L17</fullName>
    </alternativeName>
</protein>
<feature type="chain" id="PRO_1000144368" description="Large ribosomal subunit protein bL17">
    <location>
        <begin position="1"/>
        <end position="126"/>
    </location>
</feature>
<keyword id="KW-0687">Ribonucleoprotein</keyword>
<keyword id="KW-0689">Ribosomal protein</keyword>
<evidence type="ECO:0000255" key="1">
    <source>
        <dbReference type="HAMAP-Rule" id="MF_01368"/>
    </source>
</evidence>
<evidence type="ECO:0000305" key="2"/>
<comment type="subunit">
    <text evidence="1">Part of the 50S ribosomal subunit. Contacts protein L32.</text>
</comment>
<comment type="similarity">
    <text evidence="1">Belongs to the bacterial ribosomal protein bL17 family.</text>
</comment>
<organism>
    <name type="scientific">Aliivibrio salmonicida (strain LFI1238)</name>
    <name type="common">Vibrio salmonicida (strain LFI1238)</name>
    <dbReference type="NCBI Taxonomy" id="316275"/>
    <lineage>
        <taxon>Bacteria</taxon>
        <taxon>Pseudomonadati</taxon>
        <taxon>Pseudomonadota</taxon>
        <taxon>Gammaproteobacteria</taxon>
        <taxon>Vibrionales</taxon>
        <taxon>Vibrionaceae</taxon>
        <taxon>Aliivibrio</taxon>
    </lineage>
</organism>
<proteinExistence type="inferred from homology"/>
<accession>B6EPV0</accession>
<dbReference type="EMBL" id="FM178379">
    <property type="protein sequence ID" value="CAQ78030.1"/>
    <property type="molecule type" value="Genomic_DNA"/>
</dbReference>
<dbReference type="RefSeq" id="WP_012549173.1">
    <property type="nucleotide sequence ID" value="NC_011312.1"/>
</dbReference>
<dbReference type="SMR" id="B6EPV0"/>
<dbReference type="KEGG" id="vsa:VSAL_I0345"/>
<dbReference type="eggNOG" id="COG0203">
    <property type="taxonomic scope" value="Bacteria"/>
</dbReference>
<dbReference type="HOGENOM" id="CLU_074407_2_0_6"/>
<dbReference type="Proteomes" id="UP000001730">
    <property type="component" value="Chromosome 1"/>
</dbReference>
<dbReference type="GO" id="GO:0022625">
    <property type="term" value="C:cytosolic large ribosomal subunit"/>
    <property type="evidence" value="ECO:0007669"/>
    <property type="project" value="TreeGrafter"/>
</dbReference>
<dbReference type="GO" id="GO:0003735">
    <property type="term" value="F:structural constituent of ribosome"/>
    <property type="evidence" value="ECO:0007669"/>
    <property type="project" value="InterPro"/>
</dbReference>
<dbReference type="GO" id="GO:0006412">
    <property type="term" value="P:translation"/>
    <property type="evidence" value="ECO:0007669"/>
    <property type="project" value="UniProtKB-UniRule"/>
</dbReference>
<dbReference type="FunFam" id="3.90.1030.10:FF:000001">
    <property type="entry name" value="50S ribosomal protein L17"/>
    <property type="match status" value="1"/>
</dbReference>
<dbReference type="Gene3D" id="3.90.1030.10">
    <property type="entry name" value="Ribosomal protein L17"/>
    <property type="match status" value="1"/>
</dbReference>
<dbReference type="HAMAP" id="MF_01368">
    <property type="entry name" value="Ribosomal_bL17"/>
    <property type="match status" value="1"/>
</dbReference>
<dbReference type="InterPro" id="IPR000456">
    <property type="entry name" value="Ribosomal_bL17"/>
</dbReference>
<dbReference type="InterPro" id="IPR047859">
    <property type="entry name" value="Ribosomal_bL17_CS"/>
</dbReference>
<dbReference type="InterPro" id="IPR036373">
    <property type="entry name" value="Ribosomal_bL17_sf"/>
</dbReference>
<dbReference type="NCBIfam" id="TIGR00059">
    <property type="entry name" value="L17"/>
    <property type="match status" value="1"/>
</dbReference>
<dbReference type="PANTHER" id="PTHR14413:SF16">
    <property type="entry name" value="LARGE RIBOSOMAL SUBUNIT PROTEIN BL17M"/>
    <property type="match status" value="1"/>
</dbReference>
<dbReference type="PANTHER" id="PTHR14413">
    <property type="entry name" value="RIBOSOMAL PROTEIN L17"/>
    <property type="match status" value="1"/>
</dbReference>
<dbReference type="Pfam" id="PF01196">
    <property type="entry name" value="Ribosomal_L17"/>
    <property type="match status" value="1"/>
</dbReference>
<dbReference type="SUPFAM" id="SSF64263">
    <property type="entry name" value="Prokaryotic ribosomal protein L17"/>
    <property type="match status" value="1"/>
</dbReference>
<dbReference type="PROSITE" id="PS01167">
    <property type="entry name" value="RIBOSOMAL_L17"/>
    <property type="match status" value="1"/>
</dbReference>
<name>RL17_ALISL</name>
<sequence length="126" mass="14296">MRHRKSGRQLNRNSSHRKAMFSNMACSLVRHEIIKTTVPKAKELRRVVEPLITLAKTDSVANRRLAFARTRDNEVVAKLFTELGPRFAQRAGGYTRILKCGFRTGDKAPMAYIELVDRPEVEAAAE</sequence>